<feature type="chain" id="PRO_0000183795" description="Cytochrome c oxidase subunit 3">
    <location>
        <begin position="1"/>
        <end position="269"/>
    </location>
</feature>
<feature type="transmembrane region" description="Helical" evidence="2">
    <location>
        <begin position="21"/>
        <end position="41"/>
    </location>
</feature>
<feature type="transmembrane region" description="Helical" evidence="2">
    <location>
        <begin position="45"/>
        <end position="65"/>
    </location>
</feature>
<feature type="transmembrane region" description="Helical" evidence="2">
    <location>
        <begin position="90"/>
        <end position="110"/>
    </location>
</feature>
<feature type="transmembrane region" description="Helical" evidence="2">
    <location>
        <begin position="138"/>
        <end position="160"/>
    </location>
</feature>
<feature type="transmembrane region" description="Helical" evidence="2">
    <location>
        <begin position="167"/>
        <end position="187"/>
    </location>
</feature>
<feature type="transmembrane region" description="Helical" evidence="2">
    <location>
        <begin position="205"/>
        <end position="225"/>
    </location>
</feature>
<feature type="transmembrane region" description="Helical" evidence="2">
    <location>
        <begin position="247"/>
        <end position="267"/>
    </location>
</feature>
<feature type="sequence conflict" description="In Ref. 1; AAD29123." evidence="3" ref="1">
    <original>S</original>
    <variation>A</variation>
    <location>
        <position position="32"/>
    </location>
</feature>
<sequence length="269" mass="30432">MTHLERSRHQQFPFHLVAPSPWPIVVSFALMSLALSLALTMHGYIGHMYLIYLSILTVTLSATLWFRDIIAEATYLGDHTIAVRKGINLGFLLFVVSEILIFAALFWAYFHSAMSPNIELGGVWPPVGIQAVQPTELPLLNTIILLSSGATITYSHHGLVGGNRKNALSGLLITFWLIVIFVTCQYIEYTNATFTITDGVYGSVFYAGTGLHFLHMVMLAAMLGINYWRLRNYHLTATHHVGYETTVLYCHILDIIWLFLYIVFYWWGV</sequence>
<evidence type="ECO:0000250" key="1">
    <source>
        <dbReference type="UniProtKB" id="P00420"/>
    </source>
</evidence>
<evidence type="ECO:0000255" key="2"/>
<evidence type="ECO:0000305" key="3"/>
<name>COX3_KLULA</name>
<gene>
    <name type="primary">COX3</name>
</gene>
<dbReference type="EC" id="7.1.1.9"/>
<dbReference type="EMBL" id="AF120716">
    <property type="protein sequence ID" value="AAD29123.1"/>
    <property type="molecule type" value="Genomic_DNA"/>
</dbReference>
<dbReference type="EMBL" id="AY654900">
    <property type="protein sequence ID" value="AAT64954.1"/>
    <property type="molecule type" value="Genomic_DNA"/>
</dbReference>
<dbReference type="RefSeq" id="YP_054504.1">
    <property type="nucleotide sequence ID" value="NC_006077.1"/>
</dbReference>
<dbReference type="SMR" id="Q9XLW9"/>
<dbReference type="FunCoup" id="Q9XLW9">
    <property type="interactions" value="242"/>
</dbReference>
<dbReference type="STRING" id="284590.Q9XLW9"/>
<dbReference type="PaxDb" id="284590-Q9XLW9"/>
<dbReference type="GeneID" id="2914070"/>
<dbReference type="KEGG" id="kla:KllafMp08"/>
<dbReference type="InParanoid" id="Q9XLW9"/>
<dbReference type="GO" id="GO:0005743">
    <property type="term" value="C:mitochondrial inner membrane"/>
    <property type="evidence" value="ECO:0007669"/>
    <property type="project" value="UniProtKB-SubCell"/>
</dbReference>
<dbReference type="GO" id="GO:0004129">
    <property type="term" value="F:cytochrome-c oxidase activity"/>
    <property type="evidence" value="ECO:0007669"/>
    <property type="project" value="UniProtKB-EC"/>
</dbReference>
<dbReference type="GO" id="GO:0006123">
    <property type="term" value="P:mitochondrial electron transport, cytochrome c to oxygen"/>
    <property type="evidence" value="ECO:0007669"/>
    <property type="project" value="TreeGrafter"/>
</dbReference>
<dbReference type="CDD" id="cd01665">
    <property type="entry name" value="Cyt_c_Oxidase_III"/>
    <property type="match status" value="1"/>
</dbReference>
<dbReference type="FunFam" id="1.10.287.70:FF:000082">
    <property type="entry name" value="Cytochrome c oxidase subunit 3"/>
    <property type="match status" value="1"/>
</dbReference>
<dbReference type="Gene3D" id="1.10.287.70">
    <property type="match status" value="1"/>
</dbReference>
<dbReference type="Gene3D" id="1.20.120.80">
    <property type="entry name" value="Cytochrome c oxidase, subunit III, four-helix bundle"/>
    <property type="match status" value="1"/>
</dbReference>
<dbReference type="InterPro" id="IPR024791">
    <property type="entry name" value="Cyt_c/ubiquinol_Oxase_su3"/>
</dbReference>
<dbReference type="InterPro" id="IPR033945">
    <property type="entry name" value="Cyt_c_oxase_su3_dom"/>
</dbReference>
<dbReference type="InterPro" id="IPR000298">
    <property type="entry name" value="Cyt_c_oxidase-like_su3"/>
</dbReference>
<dbReference type="InterPro" id="IPR035973">
    <property type="entry name" value="Cyt_c_oxidase_su3-like_sf"/>
</dbReference>
<dbReference type="InterPro" id="IPR013833">
    <property type="entry name" value="Cyt_c_oxidase_su3_a-hlx"/>
</dbReference>
<dbReference type="PANTHER" id="PTHR11403:SF7">
    <property type="entry name" value="CYTOCHROME C OXIDASE SUBUNIT 3"/>
    <property type="match status" value="1"/>
</dbReference>
<dbReference type="PANTHER" id="PTHR11403">
    <property type="entry name" value="CYTOCHROME C OXIDASE SUBUNIT III"/>
    <property type="match status" value="1"/>
</dbReference>
<dbReference type="Pfam" id="PF00510">
    <property type="entry name" value="COX3"/>
    <property type="match status" value="1"/>
</dbReference>
<dbReference type="SUPFAM" id="SSF81452">
    <property type="entry name" value="Cytochrome c oxidase subunit III-like"/>
    <property type="match status" value="1"/>
</dbReference>
<dbReference type="PROSITE" id="PS50253">
    <property type="entry name" value="COX3"/>
    <property type="match status" value="1"/>
</dbReference>
<reference key="1">
    <citation type="journal article" date="2000" name="Genetics">
        <title>Highly diverged homologs of Saccharomyces cerevisiae mitochondrial mRNA-specific translational activators have orthologous functions in other budding yeasts.</title>
        <authorList>
            <person name="Costanzo M.C."/>
            <person name="Bonnefoy N."/>
            <person name="Williams E.H."/>
            <person name="Clark-Walker G.D."/>
            <person name="Fox T.D."/>
        </authorList>
    </citation>
    <scope>NUCLEOTIDE SEQUENCE [GENOMIC DNA]</scope>
    <source>
        <strain>ATCC 8585 / CBS 2359 / DSM 70799 / NBRC 1267 / NRRL Y-1140 / WM37</strain>
    </source>
</reference>
<reference key="2">
    <citation type="journal article" date="2005" name="FEMS Yeast Res.">
        <title>Complete nucleotide sequence of the mitochondrial DNA from Kluyveromyces lactis.</title>
        <authorList>
            <person name="Zivanovic Y."/>
            <person name="Wincker P."/>
            <person name="Vacherie B."/>
            <person name="Bolotin-Fukuhara M."/>
            <person name="Fukuhara H."/>
        </authorList>
    </citation>
    <scope>NUCLEOTIDE SEQUENCE [LARGE SCALE GENOMIC DNA]</scope>
    <source>
        <strain>ATCC 76492 / CBS 2359/152 / CLIB 210</strain>
    </source>
</reference>
<geneLocation type="mitochondrion"/>
<keyword id="KW-0472">Membrane</keyword>
<keyword id="KW-0496">Mitochondrion</keyword>
<keyword id="KW-0999">Mitochondrion inner membrane</keyword>
<keyword id="KW-1278">Translocase</keyword>
<keyword id="KW-0812">Transmembrane</keyword>
<keyword id="KW-1133">Transmembrane helix</keyword>
<comment type="function">
    <text evidence="1">Component of the cytochrome c oxidase, the last enzyme in the mitochondrial electron transport chain which drives oxidative phosphorylation. The respiratory chain contains 3 multisubunit complexes succinate dehydrogenase (complex II, CII), ubiquinol-cytochrome c oxidoreductase (cytochrome b-c1 complex, complex III, CIII) and cytochrome c oxidase (complex IV, CIV), that cooperate to transfer electrons derived from NADH and succinate to molecular oxygen, creating an electrochemical gradient over the inner membrane that drives transmembrane transport and the ATP synthase. Cytochrome c oxidase is the component of the respiratory chain that catalyzes the reduction of oxygen to water. Electrons originating from reduced cytochrome c in the intermembrane space (IMS) are transferred via the dinuclear copper A center (CU(A)) of subunit 2 and heme A of subunit 1 to the active site in subunit 1, a binuclear center (BNC) formed by heme A3 and copper B (CU(B)). The BNC reduces molecular oxygen to 2 water molecules using 4 electrons from cytochrome c in the IMS and 4 protons from the mitochondrial matrix.</text>
</comment>
<comment type="catalytic activity">
    <reaction evidence="1">
        <text>4 Fe(II)-[cytochrome c] + O2 + 8 H(+)(in) = 4 Fe(III)-[cytochrome c] + 2 H2O + 4 H(+)(out)</text>
        <dbReference type="Rhea" id="RHEA:11436"/>
        <dbReference type="Rhea" id="RHEA-COMP:10350"/>
        <dbReference type="Rhea" id="RHEA-COMP:14399"/>
        <dbReference type="ChEBI" id="CHEBI:15377"/>
        <dbReference type="ChEBI" id="CHEBI:15378"/>
        <dbReference type="ChEBI" id="CHEBI:15379"/>
        <dbReference type="ChEBI" id="CHEBI:29033"/>
        <dbReference type="ChEBI" id="CHEBI:29034"/>
        <dbReference type="EC" id="7.1.1.9"/>
    </reaction>
    <physiologicalReaction direction="left-to-right" evidence="1">
        <dbReference type="Rhea" id="RHEA:11437"/>
    </physiologicalReaction>
</comment>
<comment type="subunit">
    <text evidence="1">Component of the cytochrome c oxidase (complex IV, CIV), a multisubunit enzyme composed of a catalytic core of 3 subunits and several supernumerary subunits. The complex exists as a monomer or a dimer and forms supercomplexes (SCs) in the inner mitochondrial membrane with ubiquinol-cytochrome c oxidoreductase (cytochrome b-c1 complex, complex III, CIII).</text>
</comment>
<comment type="subcellular location">
    <subcellularLocation>
        <location evidence="1">Mitochondrion inner membrane</location>
        <topology evidence="1">Multi-pass membrane protein</topology>
    </subcellularLocation>
</comment>
<comment type="similarity">
    <text evidence="3">Belongs to the cytochrome c oxidase subunit 3 family.</text>
</comment>
<organism>
    <name type="scientific">Kluyveromyces lactis (strain ATCC 8585 / CBS 2359 / DSM 70799 / NBRC 1267 / NRRL Y-1140 / WM37)</name>
    <name type="common">Yeast</name>
    <name type="synonym">Candida sphaerica</name>
    <dbReference type="NCBI Taxonomy" id="284590"/>
    <lineage>
        <taxon>Eukaryota</taxon>
        <taxon>Fungi</taxon>
        <taxon>Dikarya</taxon>
        <taxon>Ascomycota</taxon>
        <taxon>Saccharomycotina</taxon>
        <taxon>Saccharomycetes</taxon>
        <taxon>Saccharomycetales</taxon>
        <taxon>Saccharomycetaceae</taxon>
        <taxon>Kluyveromyces</taxon>
    </lineage>
</organism>
<accession>Q9XLW9</accession>
<accession>Q6DN55</accession>
<proteinExistence type="inferred from homology"/>
<protein>
    <recommendedName>
        <fullName>Cytochrome c oxidase subunit 3</fullName>
        <ecNumber>7.1.1.9</ecNumber>
    </recommendedName>
    <alternativeName>
        <fullName>Cytochrome c oxidase polypeptide III</fullName>
    </alternativeName>
</protein>